<organism>
    <name type="scientific">Nicotiana tabacum</name>
    <name type="common">Common tobacco</name>
    <dbReference type="NCBI Taxonomy" id="4097"/>
    <lineage>
        <taxon>Eukaryota</taxon>
        <taxon>Viridiplantae</taxon>
        <taxon>Streptophyta</taxon>
        <taxon>Embryophyta</taxon>
        <taxon>Tracheophyta</taxon>
        <taxon>Spermatophyta</taxon>
        <taxon>Magnoliopsida</taxon>
        <taxon>eudicotyledons</taxon>
        <taxon>Gunneridae</taxon>
        <taxon>Pentapetalae</taxon>
        <taxon>asterids</taxon>
        <taxon>lamiids</taxon>
        <taxon>Solanales</taxon>
        <taxon>Solanaceae</taxon>
        <taxon>Nicotianoideae</taxon>
        <taxon>Nicotianeae</taxon>
        <taxon>Nicotiana</taxon>
    </lineage>
</organism>
<proteinExistence type="evidence at transcript level"/>
<comment type="function">
    <text evidence="1">Component of the cytochrome b6-f complex, which mediates electron transfer between photosystem II (PSII) and photosystem I (PSI), cyclic electron flow around PSI, and state transitions.</text>
</comment>
<comment type="catalytic activity">
    <reaction>
        <text>2 oxidized [plastocyanin] + a plastoquinol + 2 H(+)(in) = 2 reduced [plastocyanin] + a plastoquinone + 4 H(+)(out)</text>
        <dbReference type="Rhea" id="RHEA:22148"/>
        <dbReference type="Rhea" id="RHEA-COMP:9561"/>
        <dbReference type="Rhea" id="RHEA-COMP:9562"/>
        <dbReference type="Rhea" id="RHEA-COMP:10039"/>
        <dbReference type="Rhea" id="RHEA-COMP:10040"/>
        <dbReference type="ChEBI" id="CHEBI:15378"/>
        <dbReference type="ChEBI" id="CHEBI:17757"/>
        <dbReference type="ChEBI" id="CHEBI:29036"/>
        <dbReference type="ChEBI" id="CHEBI:49552"/>
        <dbReference type="ChEBI" id="CHEBI:62192"/>
        <dbReference type="EC" id="7.1.1.6"/>
    </reaction>
</comment>
<comment type="cofactor">
    <cofactor evidence="1">
        <name>[2Fe-2S] cluster</name>
        <dbReference type="ChEBI" id="CHEBI:190135"/>
    </cofactor>
    <text evidence="1">Binds 1 [2Fe-2S] cluster per subunit.</text>
</comment>
<comment type="subunit">
    <text evidence="1">The 4 large subunits of the cytochrome b6-f complex are cytochrome b6, subunit IV (17 kDa polypeptide, petD), cytochrome f and the Rieske protein, while the 4 small subunits are petG, petL, petM and petN. The complex functions as a dimer (By similarity).</text>
</comment>
<comment type="subcellular location">
    <subcellularLocation>
        <location evidence="1">Plastid</location>
        <location evidence="1">Chloroplast thylakoid membrane</location>
        <topology evidence="1">Single-pass membrane protein</topology>
    </subcellularLocation>
    <text evidence="1">The transmembrane helix obliquely spans the membrane in one monomer, and its extrinsic C-terminal domain is part of the other monomer.</text>
</comment>
<comment type="miscellaneous">
    <text>This protein is 1 of 2 subunits of the cytochrome b6-f complex that are encoded in the nucleus.</text>
</comment>
<comment type="miscellaneous">
    <text>The Rieske iron-sulfur protein is a high potential 2Fe-2S protein.</text>
</comment>
<comment type="similarity">
    <text evidence="3">Belongs to the Rieske iron-sulfur protein family.</text>
</comment>
<dbReference type="EC" id="7.1.1.6"/>
<dbReference type="EMBL" id="X66009">
    <property type="protein sequence ID" value="CAA46808.1"/>
    <property type="molecule type" value="mRNA"/>
</dbReference>
<dbReference type="EMBL" id="X64353">
    <property type="protein sequence ID" value="CAA45705.1"/>
    <property type="molecule type" value="mRNA"/>
</dbReference>
<dbReference type="PIR" id="S25312">
    <property type="entry name" value="S25312"/>
</dbReference>
<dbReference type="RefSeq" id="NP_001311805.1">
    <property type="nucleotide sequence ID" value="NM_001324876.1"/>
</dbReference>
<dbReference type="SMR" id="P30361"/>
<dbReference type="STRING" id="4097.P30361"/>
<dbReference type="PaxDb" id="4097-P30361"/>
<dbReference type="GeneID" id="107765416"/>
<dbReference type="KEGG" id="nta:107765416"/>
<dbReference type="OMA" id="FTPWTET"/>
<dbReference type="OrthoDB" id="1637982at2759"/>
<dbReference type="PhylomeDB" id="P30361"/>
<dbReference type="Proteomes" id="UP000084051">
    <property type="component" value="Unplaced"/>
</dbReference>
<dbReference type="GO" id="GO:0009535">
    <property type="term" value="C:chloroplast thylakoid membrane"/>
    <property type="evidence" value="ECO:0007669"/>
    <property type="project" value="UniProtKB-SubCell"/>
</dbReference>
<dbReference type="GO" id="GO:0005886">
    <property type="term" value="C:plasma membrane"/>
    <property type="evidence" value="ECO:0000318"/>
    <property type="project" value="GO_Central"/>
</dbReference>
<dbReference type="GO" id="GO:0051537">
    <property type="term" value="F:2 iron, 2 sulfur cluster binding"/>
    <property type="evidence" value="ECO:0007669"/>
    <property type="project" value="UniProtKB-KW"/>
</dbReference>
<dbReference type="GO" id="GO:0045158">
    <property type="term" value="F:electron transporter, transferring electrons within cytochrome b6/f complex of photosystem II activity"/>
    <property type="evidence" value="ECO:0007669"/>
    <property type="project" value="InterPro"/>
</dbReference>
<dbReference type="GO" id="GO:0046872">
    <property type="term" value="F:metal ion binding"/>
    <property type="evidence" value="ECO:0007669"/>
    <property type="project" value="UniProtKB-KW"/>
</dbReference>
<dbReference type="GO" id="GO:0016491">
    <property type="term" value="F:oxidoreductase activity"/>
    <property type="evidence" value="ECO:0000318"/>
    <property type="project" value="GO_Central"/>
</dbReference>
<dbReference type="GO" id="GO:0009496">
    <property type="term" value="F:plastoquinol--plastocyanin reductase activity"/>
    <property type="evidence" value="ECO:0007669"/>
    <property type="project" value="UniProtKB-EC"/>
</dbReference>
<dbReference type="CDD" id="cd03471">
    <property type="entry name" value="Rieske_cytochrome_b6f"/>
    <property type="match status" value="1"/>
</dbReference>
<dbReference type="FunFam" id="1.20.5.700:FF:000002">
    <property type="entry name" value="Cytochrome b6-f complex iron-sulfur subunit"/>
    <property type="match status" value="1"/>
</dbReference>
<dbReference type="FunFam" id="2.102.10.10:FF:000007">
    <property type="entry name" value="Cytochrome b6-f complex iron-sulfur subunit"/>
    <property type="match status" value="1"/>
</dbReference>
<dbReference type="Gene3D" id="2.102.10.10">
    <property type="entry name" value="Rieske [2Fe-2S] iron-sulphur domain"/>
    <property type="match status" value="1"/>
</dbReference>
<dbReference type="Gene3D" id="1.20.5.700">
    <property type="entry name" value="Single helix bin"/>
    <property type="match status" value="1"/>
</dbReference>
<dbReference type="HAMAP" id="MF_01335">
    <property type="entry name" value="Cytb6_f_Rieske"/>
    <property type="match status" value="1"/>
</dbReference>
<dbReference type="InterPro" id="IPR023960">
    <property type="entry name" value="Cyt_b6_f_Rieske"/>
</dbReference>
<dbReference type="InterPro" id="IPR017941">
    <property type="entry name" value="Rieske_2Fe-2S"/>
</dbReference>
<dbReference type="InterPro" id="IPR036922">
    <property type="entry name" value="Rieske_2Fe-2S_sf"/>
</dbReference>
<dbReference type="InterPro" id="IPR014349">
    <property type="entry name" value="Rieske_Fe-S_prot"/>
</dbReference>
<dbReference type="InterPro" id="IPR005805">
    <property type="entry name" value="Rieske_Fe-S_prot_C"/>
</dbReference>
<dbReference type="NCBIfam" id="NF045928">
    <property type="entry name" value="Cytb6fFeSPetC"/>
    <property type="match status" value="1"/>
</dbReference>
<dbReference type="NCBIfam" id="NF010001">
    <property type="entry name" value="PRK13474.1"/>
    <property type="match status" value="1"/>
</dbReference>
<dbReference type="PANTHER" id="PTHR10134">
    <property type="entry name" value="CYTOCHROME B-C1 COMPLEX SUBUNIT RIESKE, MITOCHONDRIAL"/>
    <property type="match status" value="1"/>
</dbReference>
<dbReference type="Pfam" id="PF00355">
    <property type="entry name" value="Rieske"/>
    <property type="match status" value="1"/>
</dbReference>
<dbReference type="Pfam" id="PF25471">
    <property type="entry name" value="TM_PetC"/>
    <property type="match status" value="1"/>
</dbReference>
<dbReference type="PRINTS" id="PR00162">
    <property type="entry name" value="RIESKE"/>
</dbReference>
<dbReference type="SUPFAM" id="SSF50022">
    <property type="entry name" value="ISP domain"/>
    <property type="match status" value="1"/>
</dbReference>
<dbReference type="PROSITE" id="PS51296">
    <property type="entry name" value="RIESKE"/>
    <property type="match status" value="1"/>
</dbReference>
<name>UCRIA_TOBAC</name>
<accession>P30361</accession>
<reference key="1">
    <citation type="journal article" date="1992" name="Plant Mol. Biol.">
        <title>Import and processing of the precursor of the Rieske FeS protein of tobacco chloroplasts.</title>
        <authorList>
            <person name="Madueo F."/>
            <person name="Napier J.A."/>
            <person name="Cejudo F.J."/>
            <person name="Gray J.C."/>
        </authorList>
    </citation>
    <scope>NUCLEOTIDE SEQUENCE [MRNA]</scope>
    <source>
        <tissue>Leaf</tissue>
    </source>
</reference>
<reference key="2">
    <citation type="journal article" date="1991" name="J. Photochem. Photobiol. B">
        <title>Different blue-light requirement for the accumulation of transcripts from nuclear genes for thylakoid proteins in Nicotiana tabacum and Lycopersicon esculentum.</title>
        <authorList>
            <person name="Palomares R."/>
            <person name="Herrmann R.G."/>
            <person name="Oelmueller R."/>
        </authorList>
    </citation>
    <scope>NUCLEOTIDE SEQUENCE [MRNA]</scope>
    <source>
        <strain>cv. Samsun NN</strain>
        <tissue>Seedling</tissue>
    </source>
</reference>
<keyword id="KW-0001">2Fe-2S</keyword>
<keyword id="KW-0150">Chloroplast</keyword>
<keyword id="KW-1015">Disulfide bond</keyword>
<keyword id="KW-0249">Electron transport</keyword>
<keyword id="KW-0408">Iron</keyword>
<keyword id="KW-0411">Iron-sulfur</keyword>
<keyword id="KW-0472">Membrane</keyword>
<keyword id="KW-0479">Metal-binding</keyword>
<keyword id="KW-0934">Plastid</keyword>
<keyword id="KW-1185">Reference proteome</keyword>
<keyword id="KW-0793">Thylakoid</keyword>
<keyword id="KW-0809">Transit peptide</keyword>
<keyword id="KW-1278">Translocase</keyword>
<keyword id="KW-0812">Transmembrane</keyword>
<keyword id="KW-1133">Transmembrane helix</keyword>
<keyword id="KW-0813">Transport</keyword>
<protein>
    <recommendedName>
        <fullName>Cytochrome b6-f complex iron-sulfur subunit 1, chloroplastic</fullName>
        <ecNumber>7.1.1.6</ecNumber>
    </recommendedName>
    <alternativeName>
        <fullName>Plastohydroquinone:plastocyanin oxidoreductase iron-sulfur protein 1</fullName>
    </alternativeName>
    <alternativeName>
        <fullName>Rieske iron-sulfur protein 1</fullName>
        <shortName>ISP 1</shortName>
        <shortName>RISP 1</shortName>
    </alternativeName>
</protein>
<sequence length="228" mass="24152">MASSTLSPVTQLCSSKSGLSSVSQCLLVKPMKINSHGLGKDKRMKVKCMATSIPADDRVPDMEKRNLMNLLLLGALSLPTAGMLVPYGTFFVPPGSGGGSGGTPAKDALGNDVIASEWLKTHPPGNRTLTQGLKGDPTYLVVENDGTLATYGINAVCTHLGCVVPFNAAENKFICPCHGSQYNNQGRVVRGPAPLSLALAHADIDDGKVVFVPWVETDFRTGEDPWWA</sequence>
<evidence type="ECO:0000250" key="1"/>
<evidence type="ECO:0000255" key="2"/>
<evidence type="ECO:0000255" key="3">
    <source>
        <dbReference type="HAMAP-Rule" id="MF_01335"/>
    </source>
</evidence>
<evidence type="ECO:0000305" key="4"/>
<gene>
    <name type="primary">petC1</name>
    <name type="synonym">petC</name>
</gene>
<feature type="transit peptide" description="Chloroplast" evidence="1">
    <location>
        <begin position="1"/>
        <end position="49"/>
    </location>
</feature>
<feature type="chain" id="PRO_0000030694" description="Cytochrome b6-f complex iron-sulfur subunit 1, chloroplastic">
    <location>
        <begin position="50"/>
        <end position="228"/>
    </location>
</feature>
<feature type="transmembrane region" description="Helical" evidence="2">
    <location>
        <begin position="72"/>
        <end position="92"/>
    </location>
</feature>
<feature type="domain" description="Rieske">
    <location>
        <begin position="115"/>
        <end position="211"/>
    </location>
</feature>
<feature type="binding site" evidence="1">
    <location>
        <position position="157"/>
    </location>
    <ligand>
        <name>[2Fe-2S] cluster</name>
        <dbReference type="ChEBI" id="CHEBI:190135"/>
    </ligand>
</feature>
<feature type="binding site" evidence="1">
    <location>
        <position position="159"/>
    </location>
    <ligand>
        <name>[2Fe-2S] cluster</name>
        <dbReference type="ChEBI" id="CHEBI:190135"/>
    </ligand>
</feature>
<feature type="binding site" evidence="1">
    <location>
        <position position="175"/>
    </location>
    <ligand>
        <name>[2Fe-2S] cluster</name>
        <dbReference type="ChEBI" id="CHEBI:190135"/>
    </ligand>
</feature>
<feature type="binding site" evidence="1">
    <location>
        <position position="178"/>
    </location>
    <ligand>
        <name>[2Fe-2S] cluster</name>
        <dbReference type="ChEBI" id="CHEBI:190135"/>
    </ligand>
</feature>
<feature type="disulfide bond" evidence="1">
    <location>
        <begin position="162"/>
        <end position="177"/>
    </location>
</feature>
<feature type="sequence conflict" description="In Ref. 2; CAA45705." evidence="4" ref="2">
    <original>P</original>
    <variation>S</variation>
    <location>
        <position position="86"/>
    </location>
</feature>
<feature type="sequence conflict" description="In Ref. 2; CAA45705." evidence="4" ref="2">
    <original>L</original>
    <variation>V</variation>
    <location>
        <position position="148"/>
    </location>
</feature>